<reference key="1">
    <citation type="journal article" date="1998" name="DNA Res.">
        <title>Structural analysis of Arabidopsis thaliana chromosome 5. VIII. Sequence features of the regions of 1,081,958 bp covered by seventeen physically assigned P1 and TAC clones.</title>
        <authorList>
            <person name="Asamizu E."/>
            <person name="Sato S."/>
            <person name="Kaneko T."/>
            <person name="Nakamura Y."/>
            <person name="Kotani H."/>
            <person name="Miyajima N."/>
            <person name="Tabata S."/>
        </authorList>
    </citation>
    <scope>NUCLEOTIDE SEQUENCE [LARGE SCALE GENOMIC DNA]</scope>
    <source>
        <strain>cv. Columbia</strain>
    </source>
</reference>
<reference key="2">
    <citation type="journal article" date="2017" name="Plant J.">
        <title>Araport11: a complete reannotation of the Arabidopsis thaliana reference genome.</title>
        <authorList>
            <person name="Cheng C.Y."/>
            <person name="Krishnakumar V."/>
            <person name="Chan A.P."/>
            <person name="Thibaud-Nissen F."/>
            <person name="Schobel S."/>
            <person name="Town C.D."/>
        </authorList>
    </citation>
    <scope>GENOME REANNOTATION</scope>
    <source>
        <strain>cv. Columbia</strain>
    </source>
</reference>
<keyword id="KW-0378">Hydrolase</keyword>
<keyword id="KW-0442">Lipid degradation</keyword>
<keyword id="KW-0443">Lipid metabolism</keyword>
<keyword id="KW-0611">Plant defense</keyword>
<keyword id="KW-1185">Reference proteome</keyword>
<keyword id="KW-0808">Transferase</keyword>
<dbReference type="EC" id="3.1.1.-"/>
<dbReference type="EMBL" id="AB016875">
    <property type="protein sequence ID" value="BAB11622.1"/>
    <property type="molecule type" value="Genomic_DNA"/>
</dbReference>
<dbReference type="EMBL" id="CP002688">
    <property type="protein sequence ID" value="AED94985.1"/>
    <property type="molecule type" value="Genomic_DNA"/>
</dbReference>
<dbReference type="RefSeq" id="NP_199172.1">
    <property type="nucleotide sequence ID" value="NM_123725.2"/>
</dbReference>
<dbReference type="SMR" id="Q9FIY1"/>
<dbReference type="FunCoup" id="Q9FIY1">
    <property type="interactions" value="168"/>
</dbReference>
<dbReference type="STRING" id="3702.Q9FIY1"/>
<dbReference type="PaxDb" id="3702-AT5G43590.1"/>
<dbReference type="EnsemblPlants" id="AT5G43590.1">
    <property type="protein sequence ID" value="AT5G43590.1"/>
    <property type="gene ID" value="AT5G43590"/>
</dbReference>
<dbReference type="GeneID" id="834379"/>
<dbReference type="Gramene" id="AT5G43590.1">
    <property type="protein sequence ID" value="AT5G43590.1"/>
    <property type="gene ID" value="AT5G43590"/>
</dbReference>
<dbReference type="KEGG" id="ath:AT5G43590"/>
<dbReference type="Araport" id="AT5G43590"/>
<dbReference type="TAIR" id="AT5G43590"/>
<dbReference type="eggNOG" id="KOG0513">
    <property type="taxonomic scope" value="Eukaryota"/>
</dbReference>
<dbReference type="HOGENOM" id="CLU_000288_144_0_1"/>
<dbReference type="InParanoid" id="Q9FIY1"/>
<dbReference type="OMA" id="GFENWAF"/>
<dbReference type="PhylomeDB" id="Q9FIY1"/>
<dbReference type="BRENDA" id="3.1.1.23">
    <property type="organism ID" value="399"/>
</dbReference>
<dbReference type="PRO" id="PR:Q9FIY1"/>
<dbReference type="Proteomes" id="UP000006548">
    <property type="component" value="Chromosome 5"/>
</dbReference>
<dbReference type="ExpressionAtlas" id="Q9FIY1">
    <property type="expression patterns" value="baseline and differential"/>
</dbReference>
<dbReference type="GO" id="GO:0016787">
    <property type="term" value="F:hydrolase activity"/>
    <property type="evidence" value="ECO:0007669"/>
    <property type="project" value="UniProtKB-KW"/>
</dbReference>
<dbReference type="GO" id="GO:0016740">
    <property type="term" value="F:transferase activity"/>
    <property type="evidence" value="ECO:0007669"/>
    <property type="project" value="UniProtKB-KW"/>
</dbReference>
<dbReference type="GO" id="GO:0006952">
    <property type="term" value="P:defense response"/>
    <property type="evidence" value="ECO:0007669"/>
    <property type="project" value="UniProtKB-KW"/>
</dbReference>
<dbReference type="GO" id="GO:0016042">
    <property type="term" value="P:lipid catabolic process"/>
    <property type="evidence" value="ECO:0007669"/>
    <property type="project" value="UniProtKB-KW"/>
</dbReference>
<dbReference type="FunFam" id="3.40.1090.10:FF:000074">
    <property type="entry name" value="Patatin"/>
    <property type="match status" value="1"/>
</dbReference>
<dbReference type="Gene3D" id="3.40.1090.10">
    <property type="entry name" value="Cytosolic phospholipase A2 catalytic domain"/>
    <property type="match status" value="1"/>
</dbReference>
<dbReference type="InterPro" id="IPR016035">
    <property type="entry name" value="Acyl_Trfase/lysoPLipase"/>
</dbReference>
<dbReference type="InterPro" id="IPR002641">
    <property type="entry name" value="PNPLA_dom"/>
</dbReference>
<dbReference type="PANTHER" id="PTHR32176:SF89">
    <property type="entry name" value="PATATIN-LIKE PROTEIN 1-RELATED"/>
    <property type="match status" value="1"/>
</dbReference>
<dbReference type="PANTHER" id="PTHR32176">
    <property type="entry name" value="XYLOSE ISOMERASE"/>
    <property type="match status" value="1"/>
</dbReference>
<dbReference type="Pfam" id="PF01734">
    <property type="entry name" value="Patatin"/>
    <property type="match status" value="1"/>
</dbReference>
<dbReference type="SUPFAM" id="SSF52151">
    <property type="entry name" value="FabD/lysophospholipase-like"/>
    <property type="match status" value="1"/>
</dbReference>
<dbReference type="PROSITE" id="PS51635">
    <property type="entry name" value="PNPLA"/>
    <property type="match status" value="1"/>
</dbReference>
<organism>
    <name type="scientific">Arabidopsis thaliana</name>
    <name type="common">Mouse-ear cress</name>
    <dbReference type="NCBI Taxonomy" id="3702"/>
    <lineage>
        <taxon>Eukaryota</taxon>
        <taxon>Viridiplantae</taxon>
        <taxon>Streptophyta</taxon>
        <taxon>Embryophyta</taxon>
        <taxon>Tracheophyta</taxon>
        <taxon>Spermatophyta</taxon>
        <taxon>Magnoliopsida</taxon>
        <taxon>eudicotyledons</taxon>
        <taxon>Gunneridae</taxon>
        <taxon>Pentapetalae</taxon>
        <taxon>rosids</taxon>
        <taxon>malvids</taxon>
        <taxon>Brassicales</taxon>
        <taxon>Brassicaceae</taxon>
        <taxon>Camelineae</taxon>
        <taxon>Arabidopsis</taxon>
    </lineage>
</organism>
<gene>
    <name type="primary">PLP4</name>
    <name type="ordered locus">At5g43590</name>
    <name type="ORF">K9D7.9</name>
</gene>
<accession>Q9FIY1</accession>
<sequence>MFKNNKPPKYGNLVTILSLDGGGVRGIIGGVILANLEKHLQEIDNDESVRLADYFDVIAGTSTGGLMTAMLTAPNDSGRPLYAAKDIVPFYLEESPKIFYGSKWWDPSALWALFRPKYNGEYLHTRLGEILGETKLDQTLTNVVIPTFDIKKLQPTIFSSYHASVDPSLNAKLSDICIGTSAAPFYLPPYKFPENDKMRTFNLIDGGVTANDPTLVGMTAMSRKSIIKHPDMDGFKPLEYEKYIVISIGTGSAKREEYYSAVEAAKWGFENWAYNWKHKTTPILDIIFESSRDMVQYHTSVLFQALESEDNYLRIDADTLKKDEVFMDDSETLNLENLKNIGEKLLDTNVMRMNLDTYTYEPIPKTVNNDQELKRFAKILSDEKKLRNKTFKTMIDDSSNS</sequence>
<feature type="chain" id="PRO_0000425816" description="Patatin-like protein 4">
    <location>
        <begin position="1"/>
        <end position="401"/>
    </location>
</feature>
<feature type="domain" description="PNPLA" evidence="2">
    <location>
        <begin position="17"/>
        <end position="218"/>
    </location>
</feature>
<feature type="short sequence motif" description="GXGXXG" evidence="2">
    <location>
        <begin position="21"/>
        <end position="26"/>
    </location>
</feature>
<feature type="short sequence motif" description="GXSXG" evidence="2">
    <location>
        <begin position="60"/>
        <end position="64"/>
    </location>
</feature>
<feature type="short sequence motif" description="DGA/G" evidence="2">
    <location>
        <begin position="205"/>
        <end position="207"/>
    </location>
</feature>
<feature type="active site" description="Nucleophile" evidence="2">
    <location>
        <position position="62"/>
    </location>
</feature>
<feature type="active site" description="Proton acceptor" evidence="2">
    <location>
        <position position="205"/>
    </location>
</feature>
<proteinExistence type="inferred from homology"/>
<name>PLP4_ARATH</name>
<comment type="function">
    <text evidence="1">Possesses non-specific lipolytic acyl hydrolase (LAH) activity. Hydrolyzes phospholipids as well as galactolipids. May play a role in disease resistance (By similarity).</text>
</comment>
<comment type="domain">
    <text evidence="1">The nitrogen atoms of the two glycine residues in the GGXR motif define the oxyanion hole, and stabilize the oxyanion that forms during the nucleophilic attack by the catalytic serine during substrate cleavage.</text>
</comment>
<comment type="similarity">
    <text evidence="3">Belongs to the patatin family.</text>
</comment>
<evidence type="ECO:0000250" key="1"/>
<evidence type="ECO:0000255" key="2">
    <source>
        <dbReference type="PROSITE-ProRule" id="PRU01161"/>
    </source>
</evidence>
<evidence type="ECO:0000305" key="3"/>
<protein>
    <recommendedName>
        <fullName>Patatin-like protein 4</fullName>
        <shortName>AtPLP4</shortName>
        <ecNumber>3.1.1.-</ecNumber>
    </recommendedName>
    <alternativeName>
        <fullName>Patatin-related phospholipase A IIepsilon</fullName>
        <shortName>pPLAIIe</shortName>
    </alternativeName>
    <alternativeName>
        <fullName>Phospholipase A V</fullName>
        <shortName>AtPLA V</shortName>
    </alternativeName>
</protein>